<accession>A9MY09</accession>
<gene>
    <name evidence="1" type="primary">gpt</name>
    <name type="ordered locus">SPAB_03285</name>
</gene>
<dbReference type="EC" id="2.4.2.-" evidence="1"/>
<dbReference type="EC" id="2.4.2.22" evidence="1"/>
<dbReference type="EMBL" id="CP000886">
    <property type="protein sequence ID" value="ABX68645.1"/>
    <property type="molecule type" value="Genomic_DNA"/>
</dbReference>
<dbReference type="RefSeq" id="WP_001292018.1">
    <property type="nucleotide sequence ID" value="NC_010102.1"/>
</dbReference>
<dbReference type="SMR" id="A9MY09"/>
<dbReference type="GeneID" id="66754798"/>
<dbReference type="KEGG" id="spq:SPAB_03285"/>
<dbReference type="PATRIC" id="fig|1016998.12.peg.3103"/>
<dbReference type="HOGENOM" id="CLU_080904_3_0_6"/>
<dbReference type="BioCyc" id="SENT1016998:SPAB_RS13435-MONOMER"/>
<dbReference type="UniPathway" id="UPA00602">
    <property type="reaction ID" value="UER00658"/>
</dbReference>
<dbReference type="UniPathway" id="UPA00909">
    <property type="reaction ID" value="UER00887"/>
</dbReference>
<dbReference type="Proteomes" id="UP000008556">
    <property type="component" value="Chromosome"/>
</dbReference>
<dbReference type="GO" id="GO:0005829">
    <property type="term" value="C:cytosol"/>
    <property type="evidence" value="ECO:0007669"/>
    <property type="project" value="TreeGrafter"/>
</dbReference>
<dbReference type="GO" id="GO:0005886">
    <property type="term" value="C:plasma membrane"/>
    <property type="evidence" value="ECO:0007669"/>
    <property type="project" value="UniProtKB-SubCell"/>
</dbReference>
<dbReference type="GO" id="GO:0052657">
    <property type="term" value="F:guanine phosphoribosyltransferase activity"/>
    <property type="evidence" value="ECO:0007669"/>
    <property type="project" value="RHEA"/>
</dbReference>
<dbReference type="GO" id="GO:0004422">
    <property type="term" value="F:hypoxanthine phosphoribosyltransferase activity"/>
    <property type="evidence" value="ECO:0007669"/>
    <property type="project" value="RHEA"/>
</dbReference>
<dbReference type="GO" id="GO:0000287">
    <property type="term" value="F:magnesium ion binding"/>
    <property type="evidence" value="ECO:0007669"/>
    <property type="project" value="UniProtKB-UniRule"/>
</dbReference>
<dbReference type="GO" id="GO:0000310">
    <property type="term" value="F:xanthine phosphoribosyltransferase activity"/>
    <property type="evidence" value="ECO:0007669"/>
    <property type="project" value="UniProtKB-UniRule"/>
</dbReference>
<dbReference type="GO" id="GO:0032263">
    <property type="term" value="P:GMP salvage"/>
    <property type="evidence" value="ECO:0007669"/>
    <property type="project" value="UniProtKB-UniRule"/>
</dbReference>
<dbReference type="GO" id="GO:0032264">
    <property type="term" value="P:IMP salvage"/>
    <property type="evidence" value="ECO:0007669"/>
    <property type="project" value="TreeGrafter"/>
</dbReference>
<dbReference type="GO" id="GO:0006166">
    <property type="term" value="P:purine ribonucleoside salvage"/>
    <property type="evidence" value="ECO:0007669"/>
    <property type="project" value="UniProtKB-KW"/>
</dbReference>
<dbReference type="GO" id="GO:0032265">
    <property type="term" value="P:XMP salvage"/>
    <property type="evidence" value="ECO:0007669"/>
    <property type="project" value="UniProtKB-UniRule"/>
</dbReference>
<dbReference type="CDD" id="cd06223">
    <property type="entry name" value="PRTases_typeI"/>
    <property type="match status" value="1"/>
</dbReference>
<dbReference type="FunFam" id="3.40.50.2020:FF:000009">
    <property type="entry name" value="Xanthine phosphoribosyltransferase"/>
    <property type="match status" value="1"/>
</dbReference>
<dbReference type="Gene3D" id="3.40.50.2020">
    <property type="match status" value="1"/>
</dbReference>
<dbReference type="HAMAP" id="MF_01903">
    <property type="entry name" value="XGPRT"/>
    <property type="match status" value="1"/>
</dbReference>
<dbReference type="InterPro" id="IPR000836">
    <property type="entry name" value="PRibTrfase_dom"/>
</dbReference>
<dbReference type="InterPro" id="IPR029057">
    <property type="entry name" value="PRTase-like"/>
</dbReference>
<dbReference type="InterPro" id="IPR023747">
    <property type="entry name" value="Xanthine_Guanine_PRibTrfase"/>
</dbReference>
<dbReference type="NCBIfam" id="NF006613">
    <property type="entry name" value="PRK09177.1"/>
    <property type="match status" value="1"/>
</dbReference>
<dbReference type="PANTHER" id="PTHR39563">
    <property type="entry name" value="XANTHINE PHOSPHORIBOSYLTRANSFERASE"/>
    <property type="match status" value="1"/>
</dbReference>
<dbReference type="PANTHER" id="PTHR39563:SF1">
    <property type="entry name" value="XANTHINE-GUANINE PHOSPHORIBOSYLTRANSFERASE"/>
    <property type="match status" value="1"/>
</dbReference>
<dbReference type="Pfam" id="PF00156">
    <property type="entry name" value="Pribosyltran"/>
    <property type="match status" value="1"/>
</dbReference>
<dbReference type="SUPFAM" id="SSF53271">
    <property type="entry name" value="PRTase-like"/>
    <property type="match status" value="1"/>
</dbReference>
<dbReference type="PROSITE" id="PS00103">
    <property type="entry name" value="PUR_PYR_PR_TRANSFER"/>
    <property type="match status" value="1"/>
</dbReference>
<name>XGPT_SALPB</name>
<sequence length="152" mass="16970">MSEKYVVTWDMLQIHARKLASRLMPSEQWKGIIAVSRGGLVPGALLARELGIRHVDTVCISSYDHDNQRELKVLKRAEGDGEGFIVIDDLVDTGGTAVAIREMYPKAHFVTIFAKPAGRPLVDDYVIDIPQNTWIEQPWDMGVVFVPPISGR</sequence>
<feature type="chain" id="PRO_1000088476" description="Xanthine-guanine phosphoribosyltransferase">
    <location>
        <begin position="1"/>
        <end position="152"/>
    </location>
</feature>
<feature type="binding site" evidence="1">
    <location>
        <begin position="37"/>
        <end position="38"/>
    </location>
    <ligand>
        <name>5-phospho-alpha-D-ribose 1-diphosphate</name>
        <dbReference type="ChEBI" id="CHEBI:58017"/>
    </ligand>
</feature>
<feature type="binding site" evidence="1">
    <location>
        <position position="69"/>
    </location>
    <ligand>
        <name>5-phospho-alpha-D-ribose 1-diphosphate</name>
        <dbReference type="ChEBI" id="CHEBI:58017"/>
    </ligand>
</feature>
<feature type="binding site" evidence="1">
    <location>
        <position position="69"/>
    </location>
    <ligand>
        <name>GMP</name>
        <dbReference type="ChEBI" id="CHEBI:58115"/>
    </ligand>
</feature>
<feature type="binding site" evidence="1">
    <location>
        <begin position="88"/>
        <end position="96"/>
    </location>
    <ligand>
        <name>5-phospho-alpha-D-ribose 1-diphosphate</name>
        <dbReference type="ChEBI" id="CHEBI:58017"/>
    </ligand>
</feature>
<feature type="binding site" evidence="1">
    <location>
        <position position="89"/>
    </location>
    <ligand>
        <name>Mg(2+)</name>
        <dbReference type="ChEBI" id="CHEBI:18420"/>
    </ligand>
</feature>
<feature type="binding site" evidence="1">
    <location>
        <begin position="92"/>
        <end position="96"/>
    </location>
    <ligand>
        <name>GMP</name>
        <dbReference type="ChEBI" id="CHEBI:58115"/>
    </ligand>
</feature>
<feature type="binding site" evidence="1">
    <location>
        <position position="92"/>
    </location>
    <ligand>
        <name>guanine</name>
        <dbReference type="ChEBI" id="CHEBI:16235"/>
    </ligand>
</feature>
<feature type="binding site" evidence="1">
    <location>
        <position position="92"/>
    </location>
    <ligand>
        <name>xanthine</name>
        <dbReference type="ChEBI" id="CHEBI:17712"/>
    </ligand>
</feature>
<feature type="binding site" evidence="1">
    <location>
        <begin position="134"/>
        <end position="135"/>
    </location>
    <ligand>
        <name>GMP</name>
        <dbReference type="ChEBI" id="CHEBI:58115"/>
    </ligand>
</feature>
<feature type="binding site" evidence="1">
    <location>
        <position position="135"/>
    </location>
    <ligand>
        <name>guanine</name>
        <dbReference type="ChEBI" id="CHEBI:16235"/>
    </ligand>
</feature>
<feature type="binding site" evidence="1">
    <location>
        <position position="135"/>
    </location>
    <ligand>
        <name>xanthine</name>
        <dbReference type="ChEBI" id="CHEBI:17712"/>
    </ligand>
</feature>
<organism>
    <name type="scientific">Salmonella paratyphi B (strain ATCC BAA-1250 / SPB7)</name>
    <dbReference type="NCBI Taxonomy" id="1016998"/>
    <lineage>
        <taxon>Bacteria</taxon>
        <taxon>Pseudomonadati</taxon>
        <taxon>Pseudomonadota</taxon>
        <taxon>Gammaproteobacteria</taxon>
        <taxon>Enterobacterales</taxon>
        <taxon>Enterobacteriaceae</taxon>
        <taxon>Salmonella</taxon>
    </lineage>
</organism>
<evidence type="ECO:0000255" key="1">
    <source>
        <dbReference type="HAMAP-Rule" id="MF_01903"/>
    </source>
</evidence>
<keyword id="KW-0997">Cell inner membrane</keyword>
<keyword id="KW-1003">Cell membrane</keyword>
<keyword id="KW-0328">Glycosyltransferase</keyword>
<keyword id="KW-0460">Magnesium</keyword>
<keyword id="KW-0472">Membrane</keyword>
<keyword id="KW-0479">Metal-binding</keyword>
<keyword id="KW-0660">Purine salvage</keyword>
<keyword id="KW-0808">Transferase</keyword>
<comment type="function">
    <text evidence="1">Purine salvage pathway enzyme that catalyzes the transfer of the ribosyl-5-phosphate group from 5-phospho-alpha-D-ribose 1-diphosphate (PRPP) to the N9 position of the 6-oxopurines guanine and xanthine to form the corresponding ribonucleotides GMP (guanosine 5'-monophosphate) and XMP (xanthosine 5'-monophosphate), with the release of PPi. To a lesser extent, also acts on hypoxanthine.</text>
</comment>
<comment type="catalytic activity">
    <reaction evidence="1">
        <text>GMP + diphosphate = guanine + 5-phospho-alpha-D-ribose 1-diphosphate</text>
        <dbReference type="Rhea" id="RHEA:25424"/>
        <dbReference type="ChEBI" id="CHEBI:16235"/>
        <dbReference type="ChEBI" id="CHEBI:33019"/>
        <dbReference type="ChEBI" id="CHEBI:58017"/>
        <dbReference type="ChEBI" id="CHEBI:58115"/>
    </reaction>
    <physiologicalReaction direction="right-to-left" evidence="1">
        <dbReference type="Rhea" id="RHEA:25426"/>
    </physiologicalReaction>
</comment>
<comment type="catalytic activity">
    <reaction evidence="1">
        <text>XMP + diphosphate = xanthine + 5-phospho-alpha-D-ribose 1-diphosphate</text>
        <dbReference type="Rhea" id="RHEA:10800"/>
        <dbReference type="ChEBI" id="CHEBI:17712"/>
        <dbReference type="ChEBI" id="CHEBI:33019"/>
        <dbReference type="ChEBI" id="CHEBI:57464"/>
        <dbReference type="ChEBI" id="CHEBI:58017"/>
        <dbReference type="EC" id="2.4.2.22"/>
    </reaction>
    <physiologicalReaction direction="right-to-left" evidence="1">
        <dbReference type="Rhea" id="RHEA:10802"/>
    </physiologicalReaction>
</comment>
<comment type="catalytic activity">
    <reaction evidence="1">
        <text>IMP + diphosphate = hypoxanthine + 5-phospho-alpha-D-ribose 1-diphosphate</text>
        <dbReference type="Rhea" id="RHEA:17973"/>
        <dbReference type="ChEBI" id="CHEBI:17368"/>
        <dbReference type="ChEBI" id="CHEBI:33019"/>
        <dbReference type="ChEBI" id="CHEBI:58017"/>
        <dbReference type="ChEBI" id="CHEBI:58053"/>
    </reaction>
    <physiologicalReaction direction="right-to-left" evidence="1">
        <dbReference type="Rhea" id="RHEA:17975"/>
    </physiologicalReaction>
</comment>
<comment type="cofactor">
    <cofactor evidence="1">
        <name>Mg(2+)</name>
        <dbReference type="ChEBI" id="CHEBI:18420"/>
    </cofactor>
</comment>
<comment type="pathway">
    <text evidence="1">Purine metabolism; GMP biosynthesis via salvage pathway; GMP from guanine: step 1/1.</text>
</comment>
<comment type="pathway">
    <text evidence="1">Purine metabolism; XMP biosynthesis via salvage pathway; XMP from xanthine: step 1/1.</text>
</comment>
<comment type="subunit">
    <text evidence="1">Homotetramer.</text>
</comment>
<comment type="subcellular location">
    <subcellularLocation>
        <location evidence="1">Cell inner membrane</location>
        <topology evidence="1">Peripheral membrane protein</topology>
    </subcellularLocation>
</comment>
<comment type="similarity">
    <text evidence="1">Belongs to the purine/pyrimidine phosphoribosyltransferase family. XGPT subfamily.</text>
</comment>
<proteinExistence type="inferred from homology"/>
<reference key="1">
    <citation type="submission" date="2007-11" db="EMBL/GenBank/DDBJ databases">
        <authorList>
            <consortium name="The Salmonella enterica serovar Paratyphi B Genome Sequencing Project"/>
            <person name="McClelland M."/>
            <person name="Sanderson E.K."/>
            <person name="Porwollik S."/>
            <person name="Spieth J."/>
            <person name="Clifton W.S."/>
            <person name="Fulton R."/>
            <person name="Cordes M."/>
            <person name="Wollam A."/>
            <person name="Shah N."/>
            <person name="Pepin K."/>
            <person name="Bhonagiri V."/>
            <person name="Nash W."/>
            <person name="Johnson M."/>
            <person name="Thiruvilangam P."/>
            <person name="Wilson R."/>
        </authorList>
    </citation>
    <scope>NUCLEOTIDE SEQUENCE [LARGE SCALE GENOMIC DNA]</scope>
    <source>
        <strain>ATCC BAA-1250 / SPB7</strain>
    </source>
</reference>
<protein>
    <recommendedName>
        <fullName evidence="1">Xanthine-guanine phosphoribosyltransferase</fullName>
        <shortName evidence="1">XGPRT</shortName>
        <ecNumber evidence="1">2.4.2.-</ecNumber>
        <ecNumber evidence="1">2.4.2.22</ecNumber>
    </recommendedName>
    <alternativeName>
        <fullName evidence="1">Xanthine phosphoribosyltransferase</fullName>
    </alternativeName>
</protein>